<evidence type="ECO:0000250" key="1">
    <source>
        <dbReference type="UniProtKB" id="B9EJA2"/>
    </source>
</evidence>
<evidence type="ECO:0000250" key="2">
    <source>
        <dbReference type="UniProtKB" id="Q2IBD4"/>
    </source>
</evidence>
<evidence type="ECO:0000250" key="3">
    <source>
        <dbReference type="UniProtKB" id="Q8WZ74"/>
    </source>
</evidence>
<evidence type="ECO:0000255" key="4"/>
<evidence type="ECO:0000256" key="5">
    <source>
        <dbReference type="SAM" id="MobiDB-lite"/>
    </source>
</evidence>
<dbReference type="EMBL" id="DP000025">
    <property type="protein sequence ID" value="ABC87456.1"/>
    <property type="molecule type" value="Genomic_DNA"/>
</dbReference>
<dbReference type="SMR" id="Q2IBF7"/>
<dbReference type="FunCoup" id="Q2IBF7">
    <property type="interactions" value="113"/>
</dbReference>
<dbReference type="STRING" id="9593.ENSGGOP00000014590"/>
<dbReference type="eggNOG" id="ENOG502QWG2">
    <property type="taxonomic scope" value="Eukaryota"/>
</dbReference>
<dbReference type="InParanoid" id="Q2IBF7"/>
<dbReference type="Proteomes" id="UP000001519">
    <property type="component" value="Unplaced"/>
</dbReference>
<dbReference type="GO" id="GO:0005938">
    <property type="term" value="C:cell cortex"/>
    <property type="evidence" value="ECO:0007669"/>
    <property type="project" value="UniProtKB-SubCell"/>
</dbReference>
<dbReference type="GO" id="GO:0043197">
    <property type="term" value="C:dendritic spine"/>
    <property type="evidence" value="ECO:0000250"/>
    <property type="project" value="UniProtKB"/>
</dbReference>
<dbReference type="GO" id="GO:0090443">
    <property type="term" value="C:FAR/SIN/STRIPAK complex"/>
    <property type="evidence" value="ECO:0000250"/>
    <property type="project" value="UniProtKB"/>
</dbReference>
<dbReference type="GO" id="GO:0098978">
    <property type="term" value="C:glutamatergic synapse"/>
    <property type="evidence" value="ECO:0000318"/>
    <property type="project" value="GO_Central"/>
</dbReference>
<dbReference type="GO" id="GO:0050807">
    <property type="term" value="P:regulation of synapse organization"/>
    <property type="evidence" value="ECO:0000318"/>
    <property type="project" value="GO_Central"/>
</dbReference>
<dbReference type="Gene3D" id="1.25.40.20">
    <property type="entry name" value="Ankyrin repeat-containing domain"/>
    <property type="match status" value="1"/>
</dbReference>
<dbReference type="InterPro" id="IPR002110">
    <property type="entry name" value="Ankyrin_rpt"/>
</dbReference>
<dbReference type="InterPro" id="IPR036770">
    <property type="entry name" value="Ankyrin_rpt-contain_sf"/>
</dbReference>
<dbReference type="InterPro" id="IPR050719">
    <property type="entry name" value="Cortactin-Actin_Reg"/>
</dbReference>
<dbReference type="InterPro" id="IPR019131">
    <property type="entry name" value="Cortactin-binding_p2_N"/>
</dbReference>
<dbReference type="PANTHER" id="PTHR23166:SF9">
    <property type="entry name" value="CTTNBP2 N-TERMINAL-LIKE PROTEIN"/>
    <property type="match status" value="1"/>
</dbReference>
<dbReference type="PANTHER" id="PTHR23166">
    <property type="entry name" value="FILAMIN/GPBP-INTERACTING PROTEIN"/>
    <property type="match status" value="1"/>
</dbReference>
<dbReference type="Pfam" id="PF25408">
    <property type="entry name" value="AAA_lid_NAV1"/>
    <property type="match status" value="1"/>
</dbReference>
<dbReference type="Pfam" id="PF00023">
    <property type="entry name" value="Ank"/>
    <property type="match status" value="2"/>
</dbReference>
<dbReference type="Pfam" id="PF12796">
    <property type="entry name" value="Ank_2"/>
    <property type="match status" value="1"/>
</dbReference>
<dbReference type="Pfam" id="PF09727">
    <property type="entry name" value="CortBP2"/>
    <property type="match status" value="1"/>
</dbReference>
<dbReference type="SMART" id="SM00248">
    <property type="entry name" value="ANK"/>
    <property type="match status" value="6"/>
</dbReference>
<dbReference type="SUPFAM" id="SSF48403">
    <property type="entry name" value="Ankyrin repeat"/>
    <property type="match status" value="1"/>
</dbReference>
<dbReference type="PROSITE" id="PS50297">
    <property type="entry name" value="ANK_REP_REGION"/>
    <property type="match status" value="1"/>
</dbReference>
<dbReference type="PROSITE" id="PS50088">
    <property type="entry name" value="ANK_REPEAT"/>
    <property type="match status" value="4"/>
</dbReference>
<gene>
    <name type="primary">CTTNBP2</name>
    <name type="synonym">CORTBP2</name>
</gene>
<comment type="function">
    <text evidence="2">Regulates the dendritic spine distribution of CTTN/cortactin in hippocampal neurons, and thus controls dendritic spinogenesis and dendritic spine maintenance. Associates with the striatin-interacting phosphatase and kinase (STRIPAK) core complex to regulate dendritic spine distribution of the STRIPAK complex in hippocampal neurons.</text>
</comment>
<comment type="subunit">
    <text evidence="2">Interacts with CTTN/cortactin SH3 domain. Interacts with STRN, STRN4/zinedin and MOB4/phocein; this interactions mediate the association with the STRIPAK core complex and may regulate dendritic spine distribution of the STRIPAK complex in hippocampal neurons. Activation of glutamate receptors weakens the interaction with STRN and STRN4.</text>
</comment>
<comment type="subcellular location">
    <subcellularLocation>
        <location evidence="1">Cytoplasm</location>
        <location evidence="1">Cell cortex</location>
    </subcellularLocation>
    <subcellularLocation>
        <location evidence="2">Cell projection</location>
        <location evidence="2">Dendritic spine</location>
    </subcellularLocation>
    <text evidence="2">Remains associated with dendritic spines even after glutamate stimulation.</text>
</comment>
<name>CTTB2_GORGO</name>
<sequence>MATDGASCEPDLSRAPEDAAGAAAEAAKKEFDVDTLSKSELRMLLSVMEGELEARDLVIEALRARRKEVFIQERYGRFNLNDPFLALQRDYEAGAGDKEKKPVCTNPLSILEAVMAHCKKMQERMSAQLAAAESRQKKLEMEKLQLQALEQEHKKLAARLEEERGKNKQVVLMLVKECKQLSGKVIEEAQKLEDVMAKLEEEKKKTNELEEELSAEKRRSTEMEAQMEKQLSEFDTEREQLRAKLNREEAHTTDLKEEIDKMRKMIEQLKKGSDSKPSLSLPRKTKDRRLVSISVGTEGTVTRSVACQTDLVTESADHMKKLPLIMPVKSSTGSPLVSANAKGSVCTSATMARPGIDRQASYGDLIGASVPAFPPPSANKIEENGPSTGSTSDPTSSTPPLPSNAAPPTAQTPGIAPQNSQAPPMHSLHSPCANTSLHPGLNPRIQAARFRFQGNANDPDQNGNTTQSPPSRDVSPTSRDNLVAKQLARNTVTQALSRFTSPQAGAPSRPGAPPTGDVGTHPPVGRTSLKTHGVARVDRGNPPPIPPKKPGLSQTPSPPHPQLKVIIDSSRASNTGAKVDNKTVASTPSSLPQGNRVINEENLPKSSSPQLPPKPSIDLTVAPAGCAVSALATSQVGAWPAATPGLNQPACSDSSLVIPTTIAFCSSINPVSASSCRPGASDSLLVTASGWSPSLTPLLMSGGPAPLAGRPTLLQQAAAQGNVTLLSMLLNEEGLDINYSCEDGHSALYSAAKNGHTDCVRLLLSAEAQVNAADKNGFTPLCAAAAQGHFECVELLISYDANINHAADGGQTPLYLACKNGNKECIKLLLEAGTNRSVKTTDGWTPVHAAVDTGNVDSLKLLMYHRIPAHGNSFNEEESESSVFDLDGGEESPEGICKPVVPADLINHANREGWTAAHIAASKGFKNCLEILCRHGGLEPERRDKCNRTVHDVATDDCKHLLENLNALKIPLRISVGEIEPSNYGSDDLECENTICALNIRKQTSWDDFSKAVSQALTNHFQAISSDGWWSLEDVTCNNTTDSNIGLSARSIRSITLGNVPWSVGQSFAQSPWDFMRKNKAEHITVLLSGPQEGCLSSVTYASMIPLQMMQNYLRLVEQYHNVIFHGPEGSLQDYIVHQLALCLKHRQMAAGFSCEIVRAEVDAGFSKEQLLDLFISSACLIPVKQSPSKKKIIIILENLEKSSLSELLRDFLAPLENRSTESPCTFQKGNGLSECYYFHENCFLMGTIAKACLQGSDLLVQQHFRWVQLRWDGEPMQGLLQRFLRRKVVNKFKGQAPSPCDPVCKIVDWALSVWRQLNSCLARLGTPEALLGPKYFLSCPVVPGHAQVTVKWMSKLWNGVIAPRVQEAILSRASVKRQPGFGQTTAKRHPSQGQQAVVKAALSILLNKAVLHGCPLPRAELDQHTADFKGGSFPLSIVSSYNTCNKKKGESGAWRKVNTSPRRKSGRFSLPTWNKPDLSTEGMKNKTISQLNCNRNASLSKQKSLENDLSLTLNLDQRLSLGSDDEADLVKELQSMCSSKSESDISKIADSRDDLRMFDSSGNNPVLSATINNPRMPVSQKEVSPLSSHQTTECSNSKSKTELGVSRVKSFLPVPRSKVTQCSQNTKRSSSSSNTRQIEINNNSKEENWNLHKNGHLEKPNK</sequence>
<organism>
    <name type="scientific">Gorilla gorilla gorilla</name>
    <name type="common">Western lowland gorilla</name>
    <dbReference type="NCBI Taxonomy" id="9595"/>
    <lineage>
        <taxon>Eukaryota</taxon>
        <taxon>Metazoa</taxon>
        <taxon>Chordata</taxon>
        <taxon>Craniata</taxon>
        <taxon>Vertebrata</taxon>
        <taxon>Euteleostomi</taxon>
        <taxon>Mammalia</taxon>
        <taxon>Eutheria</taxon>
        <taxon>Euarchontoglires</taxon>
        <taxon>Primates</taxon>
        <taxon>Haplorrhini</taxon>
        <taxon>Catarrhini</taxon>
        <taxon>Hominidae</taxon>
        <taxon>Gorilla</taxon>
    </lineage>
</organism>
<feature type="chain" id="PRO_0000260406" description="Cortactin-binding protein 2">
    <location>
        <begin position="1"/>
        <end position="1663"/>
    </location>
</feature>
<feature type="repeat" description="ANK 1">
    <location>
        <begin position="709"/>
        <end position="739"/>
    </location>
</feature>
<feature type="repeat" description="ANK 2">
    <location>
        <begin position="743"/>
        <end position="772"/>
    </location>
</feature>
<feature type="repeat" description="ANK 3">
    <location>
        <begin position="776"/>
        <end position="805"/>
    </location>
</feature>
<feature type="repeat" description="ANK 4">
    <location>
        <begin position="809"/>
        <end position="838"/>
    </location>
</feature>
<feature type="repeat" description="ANK 5">
    <location>
        <begin position="842"/>
        <end position="871"/>
    </location>
</feature>
<feature type="repeat" description="ANK 6">
    <location>
        <begin position="912"/>
        <end position="942"/>
    </location>
</feature>
<feature type="region of interest" description="Disordered" evidence="5">
    <location>
        <begin position="1"/>
        <end position="23"/>
    </location>
</feature>
<feature type="region of interest" description="Disordered" evidence="5">
    <location>
        <begin position="203"/>
        <end position="222"/>
    </location>
</feature>
<feature type="region of interest" description="Disordered" evidence="5">
    <location>
        <begin position="367"/>
        <end position="440"/>
    </location>
</feature>
<feature type="region of interest" description="Disordered" evidence="5">
    <location>
        <begin position="454"/>
        <end position="478"/>
    </location>
</feature>
<feature type="region of interest" description="Disordered" evidence="5">
    <location>
        <begin position="498"/>
        <end position="614"/>
    </location>
</feature>
<feature type="region of interest" description="Disordered" evidence="5">
    <location>
        <begin position="1448"/>
        <end position="1483"/>
    </location>
</feature>
<feature type="region of interest" description="Disordered" evidence="5">
    <location>
        <begin position="1560"/>
        <end position="1663"/>
    </location>
</feature>
<feature type="coiled-coil region" evidence="4">
    <location>
        <begin position="119"/>
        <end position="276"/>
    </location>
</feature>
<feature type="compositionally biased region" description="Low complexity" evidence="5">
    <location>
        <begin position="386"/>
        <end position="396"/>
    </location>
</feature>
<feature type="compositionally biased region" description="Polar residues" evidence="5">
    <location>
        <begin position="583"/>
        <end position="593"/>
    </location>
</feature>
<feature type="compositionally biased region" description="Polar residues" evidence="5">
    <location>
        <begin position="1561"/>
        <end position="1574"/>
    </location>
</feature>
<feature type="compositionally biased region" description="Polar residues" evidence="5">
    <location>
        <begin position="1582"/>
        <end position="1599"/>
    </location>
</feature>
<feature type="compositionally biased region" description="Low complexity" evidence="5">
    <location>
        <begin position="1624"/>
        <end position="1638"/>
    </location>
</feature>
<feature type="compositionally biased region" description="Basic and acidic residues" evidence="5">
    <location>
        <begin position="1645"/>
        <end position="1663"/>
    </location>
</feature>
<feature type="modified residue" description="Asymmetric dimethylarginine" evidence="1">
    <location>
        <position position="498"/>
    </location>
</feature>
<feature type="modified residue" description="Phosphoserine" evidence="3">
    <location>
        <position position="1524"/>
    </location>
</feature>
<reference key="1">
    <citation type="submission" date="2006-01" db="EMBL/GenBank/DDBJ databases">
        <title>NISC comparative sequencing initiative.</title>
        <authorList>
            <person name="Antonellis A."/>
            <person name="Ayele K."/>
            <person name="Benjamin B."/>
            <person name="Blakesley R.W."/>
            <person name="Boakye A."/>
            <person name="Bouffard G.G."/>
            <person name="Brinkley C."/>
            <person name="Brooks S."/>
            <person name="Chu G."/>
            <person name="Coleman H."/>
            <person name="Engle J."/>
            <person name="Gestole M."/>
            <person name="Greene A."/>
            <person name="Guan X."/>
            <person name="Gupta J."/>
            <person name="Haghighi P."/>
            <person name="Han J."/>
            <person name="Hansen N."/>
            <person name="Ho S.-L."/>
            <person name="Hu P."/>
            <person name="Hunter G."/>
            <person name="Hurle B."/>
            <person name="Idol J.R."/>
            <person name="Kwong P."/>
            <person name="Laric P."/>
            <person name="Larson S."/>
            <person name="Lee-Lin S.-Q."/>
            <person name="Legaspi R."/>
            <person name="Madden M."/>
            <person name="Maduro Q.L."/>
            <person name="Maduro V.B."/>
            <person name="Margulies E.H."/>
            <person name="Masiello C."/>
            <person name="Maskeri B."/>
            <person name="McDowell J."/>
            <person name="Mojidi H.A."/>
            <person name="Mullikin J.C."/>
            <person name="Oestreicher J.S."/>
            <person name="Park M."/>
            <person name="Portnoy M.E."/>
            <person name="Prasad A."/>
            <person name="Puri O."/>
            <person name="Reddix-Dugue N."/>
            <person name="Schandler K."/>
            <person name="Schueler M.G."/>
            <person name="Sison C."/>
            <person name="Stantripop S."/>
            <person name="Stephen E."/>
            <person name="Taye A."/>
            <person name="Thomas J.W."/>
            <person name="Thomas P.J."/>
            <person name="Tsipouri V."/>
            <person name="Ung L."/>
            <person name="Vogt J.L."/>
            <person name="Wetherby K.D."/>
            <person name="Young A."/>
            <person name="Green E.D."/>
        </authorList>
    </citation>
    <scope>NUCLEOTIDE SEQUENCE [LARGE SCALE GENOMIC DNA]</scope>
</reference>
<protein>
    <recommendedName>
        <fullName>Cortactin-binding protein 2</fullName>
        <shortName>CortBP2</shortName>
    </recommendedName>
</protein>
<accession>Q2IBF7</accession>
<keyword id="KW-0040">ANK repeat</keyword>
<keyword id="KW-0966">Cell projection</keyword>
<keyword id="KW-0175">Coiled coil</keyword>
<keyword id="KW-0963">Cytoplasm</keyword>
<keyword id="KW-0488">Methylation</keyword>
<keyword id="KW-0597">Phosphoprotein</keyword>
<keyword id="KW-1185">Reference proteome</keyword>
<keyword id="KW-0677">Repeat</keyword>
<keyword id="KW-0770">Synapse</keyword>
<proteinExistence type="inferred from homology"/>